<keyword id="KW-0030">Aminoacyl-tRNA synthetase</keyword>
<keyword id="KW-0067">ATP-binding</keyword>
<keyword id="KW-0963">Cytoplasm</keyword>
<keyword id="KW-0436">Ligase</keyword>
<keyword id="KW-0479">Metal-binding</keyword>
<keyword id="KW-0547">Nucleotide-binding</keyword>
<keyword id="KW-0648">Protein biosynthesis</keyword>
<keyword id="KW-0862">Zinc</keyword>
<comment type="catalytic activity">
    <reaction evidence="1">
        <text>tRNA(Cys) + L-cysteine + ATP = L-cysteinyl-tRNA(Cys) + AMP + diphosphate</text>
        <dbReference type="Rhea" id="RHEA:17773"/>
        <dbReference type="Rhea" id="RHEA-COMP:9661"/>
        <dbReference type="Rhea" id="RHEA-COMP:9679"/>
        <dbReference type="ChEBI" id="CHEBI:30616"/>
        <dbReference type="ChEBI" id="CHEBI:33019"/>
        <dbReference type="ChEBI" id="CHEBI:35235"/>
        <dbReference type="ChEBI" id="CHEBI:78442"/>
        <dbReference type="ChEBI" id="CHEBI:78517"/>
        <dbReference type="ChEBI" id="CHEBI:456215"/>
        <dbReference type="EC" id="6.1.1.16"/>
    </reaction>
</comment>
<comment type="cofactor">
    <cofactor evidence="1">
        <name>Zn(2+)</name>
        <dbReference type="ChEBI" id="CHEBI:29105"/>
    </cofactor>
    <text evidence="1">Binds 1 zinc ion per subunit.</text>
</comment>
<comment type="subunit">
    <text evidence="1">Monomer.</text>
</comment>
<comment type="subcellular location">
    <subcellularLocation>
        <location evidence="1">Cytoplasm</location>
    </subcellularLocation>
</comment>
<comment type="similarity">
    <text evidence="1">Belongs to the class-I aminoacyl-tRNA synthetase family.</text>
</comment>
<protein>
    <recommendedName>
        <fullName evidence="1">Cysteine--tRNA ligase</fullName>
        <ecNumber evidence="1">6.1.1.16</ecNumber>
    </recommendedName>
    <alternativeName>
        <fullName evidence="1">Cysteinyl-tRNA synthetase</fullName>
        <shortName evidence="1">CysRS</shortName>
    </alternativeName>
</protein>
<reference key="1">
    <citation type="submission" date="2005-09" db="EMBL/GenBank/DDBJ databases">
        <authorList>
            <person name="Glass J.I."/>
            <person name="Lartigue C."/>
            <person name="Pfannkoch C."/>
            <person name="Baden-Tillson H."/>
            <person name="Smith H.O."/>
            <person name="Venter J.C."/>
            <person name="Roske K."/>
            <person name="Wise K.S."/>
            <person name="Calcutt M.J."/>
            <person name="Nelson W.C."/>
            <person name="Nierman W.C."/>
        </authorList>
    </citation>
    <scope>NUCLEOTIDE SEQUENCE [LARGE SCALE GENOMIC DNA]</scope>
    <source>
        <strain>California kid / ATCC 27343 / NCTC 10154</strain>
    </source>
</reference>
<feature type="chain" id="PRO_0000240923" description="Cysteine--tRNA ligase">
    <location>
        <begin position="1"/>
        <end position="441"/>
    </location>
</feature>
<feature type="short sequence motif" description="'HIGH' region">
    <location>
        <begin position="26"/>
        <end position="36"/>
    </location>
</feature>
<feature type="short sequence motif" description="'KMSKS' region">
    <location>
        <begin position="262"/>
        <end position="266"/>
    </location>
</feature>
<feature type="binding site" evidence="1">
    <location>
        <position position="24"/>
    </location>
    <ligand>
        <name>Zn(2+)</name>
        <dbReference type="ChEBI" id="CHEBI:29105"/>
    </ligand>
</feature>
<feature type="binding site" evidence="1">
    <location>
        <position position="204"/>
    </location>
    <ligand>
        <name>Zn(2+)</name>
        <dbReference type="ChEBI" id="CHEBI:29105"/>
    </ligand>
</feature>
<feature type="binding site" evidence="1">
    <location>
        <position position="230"/>
    </location>
    <ligand>
        <name>Zn(2+)</name>
        <dbReference type="ChEBI" id="CHEBI:29105"/>
    </ligand>
</feature>
<feature type="binding site" evidence="1">
    <location>
        <position position="234"/>
    </location>
    <ligand>
        <name>Zn(2+)</name>
        <dbReference type="ChEBI" id="CHEBI:29105"/>
    </ligand>
</feature>
<feature type="binding site" evidence="1">
    <location>
        <position position="265"/>
    </location>
    <ligand>
        <name>ATP</name>
        <dbReference type="ChEBI" id="CHEBI:30616"/>
    </ligand>
</feature>
<evidence type="ECO:0000255" key="1">
    <source>
        <dbReference type="HAMAP-Rule" id="MF_00041"/>
    </source>
</evidence>
<dbReference type="EC" id="6.1.1.16" evidence="1"/>
<dbReference type="EMBL" id="CP000123">
    <property type="protein sequence ID" value="ABC01549.1"/>
    <property type="molecule type" value="Genomic_DNA"/>
</dbReference>
<dbReference type="RefSeq" id="WP_011387007.1">
    <property type="nucleotide sequence ID" value="NC_007633.1"/>
</dbReference>
<dbReference type="SMR" id="Q2ST11"/>
<dbReference type="GeneID" id="23778937"/>
<dbReference type="KEGG" id="mcp:MCAP_0110"/>
<dbReference type="HOGENOM" id="CLU_013528_0_0_14"/>
<dbReference type="PhylomeDB" id="Q2ST11"/>
<dbReference type="Proteomes" id="UP000001928">
    <property type="component" value="Chromosome"/>
</dbReference>
<dbReference type="GO" id="GO:0005829">
    <property type="term" value="C:cytosol"/>
    <property type="evidence" value="ECO:0007669"/>
    <property type="project" value="TreeGrafter"/>
</dbReference>
<dbReference type="GO" id="GO:0005524">
    <property type="term" value="F:ATP binding"/>
    <property type="evidence" value="ECO:0007669"/>
    <property type="project" value="UniProtKB-UniRule"/>
</dbReference>
<dbReference type="GO" id="GO:0004817">
    <property type="term" value="F:cysteine-tRNA ligase activity"/>
    <property type="evidence" value="ECO:0007669"/>
    <property type="project" value="UniProtKB-UniRule"/>
</dbReference>
<dbReference type="GO" id="GO:0008270">
    <property type="term" value="F:zinc ion binding"/>
    <property type="evidence" value="ECO:0007669"/>
    <property type="project" value="UniProtKB-UniRule"/>
</dbReference>
<dbReference type="GO" id="GO:0006423">
    <property type="term" value="P:cysteinyl-tRNA aminoacylation"/>
    <property type="evidence" value="ECO:0007669"/>
    <property type="project" value="UniProtKB-UniRule"/>
</dbReference>
<dbReference type="CDD" id="cd00672">
    <property type="entry name" value="CysRS_core"/>
    <property type="match status" value="1"/>
</dbReference>
<dbReference type="Gene3D" id="1.20.120.1910">
    <property type="entry name" value="Cysteine-tRNA ligase, C-terminal anti-codon recognition domain"/>
    <property type="match status" value="1"/>
</dbReference>
<dbReference type="Gene3D" id="3.40.50.620">
    <property type="entry name" value="HUPs"/>
    <property type="match status" value="1"/>
</dbReference>
<dbReference type="HAMAP" id="MF_00041">
    <property type="entry name" value="Cys_tRNA_synth"/>
    <property type="match status" value="1"/>
</dbReference>
<dbReference type="InterPro" id="IPR015803">
    <property type="entry name" value="Cys-tRNA-ligase"/>
</dbReference>
<dbReference type="InterPro" id="IPR015273">
    <property type="entry name" value="Cys-tRNA-synt_Ia_DALR"/>
</dbReference>
<dbReference type="InterPro" id="IPR024909">
    <property type="entry name" value="Cys-tRNA/MSH_ligase"/>
</dbReference>
<dbReference type="InterPro" id="IPR014729">
    <property type="entry name" value="Rossmann-like_a/b/a_fold"/>
</dbReference>
<dbReference type="InterPro" id="IPR032678">
    <property type="entry name" value="tRNA-synt_1_cat_dom"/>
</dbReference>
<dbReference type="InterPro" id="IPR009080">
    <property type="entry name" value="tRNAsynth_Ia_anticodon-bd"/>
</dbReference>
<dbReference type="NCBIfam" id="TIGR00435">
    <property type="entry name" value="cysS"/>
    <property type="match status" value="1"/>
</dbReference>
<dbReference type="PANTHER" id="PTHR10890:SF3">
    <property type="entry name" value="CYSTEINE--TRNA LIGASE, CYTOPLASMIC"/>
    <property type="match status" value="1"/>
</dbReference>
<dbReference type="PANTHER" id="PTHR10890">
    <property type="entry name" value="CYSTEINYL-TRNA SYNTHETASE"/>
    <property type="match status" value="1"/>
</dbReference>
<dbReference type="Pfam" id="PF09190">
    <property type="entry name" value="DALR_2"/>
    <property type="match status" value="1"/>
</dbReference>
<dbReference type="Pfam" id="PF01406">
    <property type="entry name" value="tRNA-synt_1e"/>
    <property type="match status" value="1"/>
</dbReference>
<dbReference type="PRINTS" id="PR00983">
    <property type="entry name" value="TRNASYNTHCYS"/>
</dbReference>
<dbReference type="SMART" id="SM00840">
    <property type="entry name" value="DALR_2"/>
    <property type="match status" value="1"/>
</dbReference>
<dbReference type="SUPFAM" id="SSF47323">
    <property type="entry name" value="Anticodon-binding domain of a subclass of class I aminoacyl-tRNA synthetases"/>
    <property type="match status" value="1"/>
</dbReference>
<dbReference type="SUPFAM" id="SSF52374">
    <property type="entry name" value="Nucleotidylyl transferase"/>
    <property type="match status" value="1"/>
</dbReference>
<proteinExistence type="inferred from homology"/>
<sequence length="441" mass="51872">MQLYDSLSKTKKNLNKKTINLYCCGPTVYNYIHIGNARPVILVDVLTRYLKSRNIKINYLQNITDIDDKIILKALDNNLTELEISQKYTKAYLEDLESLNINQPDKIILISEKMNEMVKFIKDLVDIKAAYELDGDVYFDIKKYQNEYCKLSGYKLDELISGKRIEIDSKKKYSLDFSLWKKTQIGIKWDSFFGLGRPGWHTECVLLIDEYFNHQTIDIHVGGIDLKFPHHENERIQFIAKNNKELADIWLHNGHLQINDEKMSKSLGNVILVKDFIKKHNKNTLRWIFLTTNYTQPLNISDDLIYQANKFFEKLTNLSKKTIQFIIKNDLKISLIKQSKYIDQFNNYMDDDLNTSLVLSLIDSLIKQINKNILDNISDNFNLLISSLSYILDVLGFKDVFNYKFKKEIKELFLKWQQLVKDKEFDKADLIRKDLIEQGIL</sequence>
<gene>
    <name evidence="1" type="primary">cysS</name>
    <name type="ordered locus">MCAP_0110</name>
</gene>
<accession>Q2ST11</accession>
<organism>
    <name type="scientific">Mycoplasma capricolum subsp. capricolum (strain California kid / ATCC 27343 / NCTC 10154)</name>
    <dbReference type="NCBI Taxonomy" id="340047"/>
    <lineage>
        <taxon>Bacteria</taxon>
        <taxon>Bacillati</taxon>
        <taxon>Mycoplasmatota</taxon>
        <taxon>Mollicutes</taxon>
        <taxon>Mycoplasmataceae</taxon>
        <taxon>Mycoplasma</taxon>
    </lineage>
</organism>
<name>SYC_MYCCT</name>